<organism>
    <name type="scientific">Amanita fuligineoides</name>
    <dbReference type="NCBI Taxonomy" id="580329"/>
    <lineage>
        <taxon>Eukaryota</taxon>
        <taxon>Fungi</taxon>
        <taxon>Dikarya</taxon>
        <taxon>Basidiomycota</taxon>
        <taxon>Agaricomycotina</taxon>
        <taxon>Agaricomycetes</taxon>
        <taxon>Agaricomycetidae</taxon>
        <taxon>Agaricales</taxon>
        <taxon>Pluteineae</taxon>
        <taxon>Amanitaceae</taxon>
        <taxon>Amanita</taxon>
    </lineage>
</organism>
<reference key="1">
    <citation type="journal article" date="2014" name="Toxicon">
        <title>The molecular diversity of toxin gene families in lethal Amanita mushrooms.</title>
        <authorList>
            <person name="Li P."/>
            <person name="Deng W."/>
            <person name="Li T."/>
        </authorList>
    </citation>
    <scope>NUCLEOTIDE SEQUENCE [GENOMIC DNA]</scope>
    <scope>FUNCTION</scope>
</reference>
<name>MSD2_AMAFL</name>
<sequence length="32" mass="3600">MSDINATRLPHLVRYPPYVGDGTDLTLNRGEK</sequence>
<protein>
    <recommendedName>
        <fullName evidence="2">MSDIN-like toxin proprotein 2</fullName>
    </recommendedName>
    <component>
        <recommendedName>
            <fullName evidence="4">Toxin MSD2</fullName>
        </recommendedName>
    </component>
</protein>
<accession>A0A023IWI4</accession>
<keyword id="KW-0800">Toxin</keyword>
<evidence type="ECO:0000250" key="1">
    <source>
        <dbReference type="UniProtKB" id="A0A067SLB9"/>
    </source>
</evidence>
<evidence type="ECO:0000303" key="2">
    <source>
    </source>
</evidence>
<evidence type="ECO:0000305" key="3"/>
<evidence type="ECO:0000305" key="4">
    <source>
    </source>
</evidence>
<comment type="function">
    <text evidence="4">Probable toxin that belongs to the MSDIN-like toxin family responsible for a large number of food poisoning cases and deaths (PubMed:24613547).</text>
</comment>
<comment type="PTM">
    <text evidence="1">Processed by the macrocyclase-peptidase enzyme POPB to yield a toxic cyclic heptapeptide (By similarity). POPB first removes 10 residues from the N-terminus (By similarity). Conformational trapping of the remaining peptide forces the enzyme to release this intermediate rather than proceed to macrocyclization (By similarity). The enzyme rebinds the remaining peptide in a different conformation and catalyzes macrocyclization of the N-terminal 7 residues (By similarity).</text>
</comment>
<comment type="similarity">
    <text evidence="3">Belongs to the MSDIN fungal toxin family.</text>
</comment>
<dbReference type="EMBL" id="KF552078">
    <property type="protein sequence ID" value="AHB18706.1"/>
    <property type="molecule type" value="Genomic_DNA"/>
</dbReference>
<dbReference type="GO" id="GO:0090729">
    <property type="term" value="F:toxin activity"/>
    <property type="evidence" value="ECO:0007669"/>
    <property type="project" value="UniProtKB-KW"/>
</dbReference>
<dbReference type="InterPro" id="IPR027582">
    <property type="entry name" value="Amanitin/phalloidin"/>
</dbReference>
<dbReference type="NCBIfam" id="TIGR04309">
    <property type="entry name" value="amanitin"/>
    <property type="match status" value="1"/>
</dbReference>
<proteinExistence type="inferred from homology"/>
<feature type="propeptide" id="PRO_0000443695" evidence="4">
    <location>
        <begin position="1"/>
        <end position="10"/>
    </location>
</feature>
<feature type="peptide" id="PRO_0000443696" description="Toxin MSD2" evidence="4">
    <location>
        <begin position="11"/>
        <end position="17"/>
    </location>
</feature>
<feature type="propeptide" id="PRO_0000443697" evidence="4">
    <location>
        <begin position="18"/>
        <end position="32"/>
    </location>
</feature>
<feature type="cross-link" description="Cyclopeptide (His-Pro)" evidence="4">
    <location>
        <begin position="11"/>
        <end position="17"/>
    </location>
</feature>